<keyword id="KW-0227">DNA damage</keyword>
<keyword id="KW-0234">DNA repair</keyword>
<keyword id="KW-0378">Hydrolase</keyword>
<keyword id="KW-1185">Reference proteome</keyword>
<comment type="similarity">
    <text evidence="1">Belongs to the DNA glycosylase MPG family.</text>
</comment>
<accession>A5U346</accession>
<name>3MGH_MYCTA</name>
<dbReference type="EC" id="3.2.2.-" evidence="1"/>
<dbReference type="EMBL" id="CP000611">
    <property type="protein sequence ID" value="ABQ73446.1"/>
    <property type="molecule type" value="Genomic_DNA"/>
</dbReference>
<dbReference type="RefSeq" id="WP_003408373.1">
    <property type="nucleotide sequence ID" value="NZ_CP016972.1"/>
</dbReference>
<dbReference type="SMR" id="A5U346"/>
<dbReference type="KEGG" id="mra:MRA_1698"/>
<dbReference type="eggNOG" id="COG2094">
    <property type="taxonomic scope" value="Bacteria"/>
</dbReference>
<dbReference type="HOGENOM" id="CLU_060471_3_1_11"/>
<dbReference type="Proteomes" id="UP000001988">
    <property type="component" value="Chromosome"/>
</dbReference>
<dbReference type="GO" id="GO:0003905">
    <property type="term" value="F:alkylbase DNA N-glycosylase activity"/>
    <property type="evidence" value="ECO:0007669"/>
    <property type="project" value="InterPro"/>
</dbReference>
<dbReference type="GO" id="GO:0003677">
    <property type="term" value="F:DNA binding"/>
    <property type="evidence" value="ECO:0007669"/>
    <property type="project" value="InterPro"/>
</dbReference>
<dbReference type="GO" id="GO:0006284">
    <property type="term" value="P:base-excision repair"/>
    <property type="evidence" value="ECO:0007669"/>
    <property type="project" value="InterPro"/>
</dbReference>
<dbReference type="CDD" id="cd00540">
    <property type="entry name" value="AAG"/>
    <property type="match status" value="1"/>
</dbReference>
<dbReference type="Gene3D" id="3.10.300.10">
    <property type="entry name" value="Methylpurine-DNA glycosylase (MPG)"/>
    <property type="match status" value="1"/>
</dbReference>
<dbReference type="HAMAP" id="MF_00527">
    <property type="entry name" value="3MGH"/>
    <property type="match status" value="1"/>
</dbReference>
<dbReference type="InterPro" id="IPR011034">
    <property type="entry name" value="Formyl_transferase-like_C_sf"/>
</dbReference>
<dbReference type="InterPro" id="IPR003180">
    <property type="entry name" value="MPG"/>
</dbReference>
<dbReference type="InterPro" id="IPR036995">
    <property type="entry name" value="MPG_sf"/>
</dbReference>
<dbReference type="NCBIfam" id="TIGR00567">
    <property type="entry name" value="3mg"/>
    <property type="match status" value="1"/>
</dbReference>
<dbReference type="NCBIfam" id="NF002003">
    <property type="entry name" value="PRK00802.1-3"/>
    <property type="match status" value="1"/>
</dbReference>
<dbReference type="PANTHER" id="PTHR10429">
    <property type="entry name" value="DNA-3-METHYLADENINE GLYCOSYLASE"/>
    <property type="match status" value="1"/>
</dbReference>
<dbReference type="PANTHER" id="PTHR10429:SF0">
    <property type="entry name" value="DNA-3-METHYLADENINE GLYCOSYLASE"/>
    <property type="match status" value="1"/>
</dbReference>
<dbReference type="Pfam" id="PF02245">
    <property type="entry name" value="Pur_DNA_glyco"/>
    <property type="match status" value="1"/>
</dbReference>
<dbReference type="SUPFAM" id="SSF50486">
    <property type="entry name" value="FMT C-terminal domain-like"/>
    <property type="match status" value="1"/>
</dbReference>
<sequence>MNAEELAIDPVAAAHRLLGATIAGRGVRAMVVEVEAYGGVPDGPWPDAAAHSYRGRNGRNDVMFGPPGRLYTYRSHGIHVCANVACGPDGTAAAVLLRAAAIEDGAELATSRRGQTVRAVALARGPGNLCAALGITMADNGIDLFDPSSPVRLRLNDTHRARSGPRVGVSQAADRPWRLWLTGRPEVSAYRRSSRAPARGASD</sequence>
<protein>
    <recommendedName>
        <fullName evidence="1">Putative 3-methyladenine DNA glycosylase</fullName>
        <ecNumber evidence="1">3.2.2.-</ecNumber>
    </recommendedName>
</protein>
<proteinExistence type="inferred from homology"/>
<evidence type="ECO:0000255" key="1">
    <source>
        <dbReference type="HAMAP-Rule" id="MF_00527"/>
    </source>
</evidence>
<reference key="1">
    <citation type="journal article" date="2008" name="PLoS ONE">
        <title>Genetic basis of virulence attenuation revealed by comparative genomic analysis of Mycobacterium tuberculosis strain H37Ra versus H37Rv.</title>
        <authorList>
            <person name="Zheng H."/>
            <person name="Lu L."/>
            <person name="Wang B."/>
            <person name="Pu S."/>
            <person name="Zhang X."/>
            <person name="Zhu G."/>
            <person name="Shi W."/>
            <person name="Zhang L."/>
            <person name="Wang H."/>
            <person name="Wang S."/>
            <person name="Zhao G."/>
            <person name="Zhang Y."/>
        </authorList>
    </citation>
    <scope>NUCLEOTIDE SEQUENCE [LARGE SCALE GENOMIC DNA]</scope>
    <source>
        <strain>ATCC 25177 / H37Ra</strain>
    </source>
</reference>
<feature type="chain" id="PRO_1000050996" description="Putative 3-methyladenine DNA glycosylase">
    <location>
        <begin position="1"/>
        <end position="203"/>
    </location>
</feature>
<gene>
    <name type="ordered locus">MRA_1698</name>
</gene>
<organism>
    <name type="scientific">Mycobacterium tuberculosis (strain ATCC 25177 / H37Ra)</name>
    <dbReference type="NCBI Taxonomy" id="419947"/>
    <lineage>
        <taxon>Bacteria</taxon>
        <taxon>Bacillati</taxon>
        <taxon>Actinomycetota</taxon>
        <taxon>Actinomycetes</taxon>
        <taxon>Mycobacteriales</taxon>
        <taxon>Mycobacteriaceae</taxon>
        <taxon>Mycobacterium</taxon>
        <taxon>Mycobacterium tuberculosis complex</taxon>
    </lineage>
</organism>